<dbReference type="EC" id="3.1.26.5" evidence="1"/>
<dbReference type="EMBL" id="CP001615">
    <property type="protein sequence ID" value="ACQ70658.1"/>
    <property type="molecule type" value="Genomic_DNA"/>
</dbReference>
<dbReference type="RefSeq" id="WP_015880217.1">
    <property type="nucleotide sequence ID" value="NC_012673.1"/>
</dbReference>
<dbReference type="SMR" id="C4KZZ5"/>
<dbReference type="STRING" id="360911.EAT1b_1732"/>
<dbReference type="GeneID" id="94373611"/>
<dbReference type="KEGG" id="eat:EAT1b_1732"/>
<dbReference type="eggNOG" id="COG0594">
    <property type="taxonomic scope" value="Bacteria"/>
</dbReference>
<dbReference type="HOGENOM" id="CLU_117179_9_1_9"/>
<dbReference type="OrthoDB" id="9810867at2"/>
<dbReference type="Proteomes" id="UP000000716">
    <property type="component" value="Chromosome"/>
</dbReference>
<dbReference type="GO" id="GO:0030677">
    <property type="term" value="C:ribonuclease P complex"/>
    <property type="evidence" value="ECO:0007669"/>
    <property type="project" value="TreeGrafter"/>
</dbReference>
<dbReference type="GO" id="GO:0042781">
    <property type="term" value="F:3'-tRNA processing endoribonuclease activity"/>
    <property type="evidence" value="ECO:0007669"/>
    <property type="project" value="TreeGrafter"/>
</dbReference>
<dbReference type="GO" id="GO:0004526">
    <property type="term" value="F:ribonuclease P activity"/>
    <property type="evidence" value="ECO:0007669"/>
    <property type="project" value="UniProtKB-UniRule"/>
</dbReference>
<dbReference type="GO" id="GO:0000049">
    <property type="term" value="F:tRNA binding"/>
    <property type="evidence" value="ECO:0007669"/>
    <property type="project" value="UniProtKB-UniRule"/>
</dbReference>
<dbReference type="GO" id="GO:0001682">
    <property type="term" value="P:tRNA 5'-leader removal"/>
    <property type="evidence" value="ECO:0007669"/>
    <property type="project" value="UniProtKB-UniRule"/>
</dbReference>
<dbReference type="FunFam" id="3.30.230.10:FF:000021">
    <property type="entry name" value="Ribonuclease P protein component"/>
    <property type="match status" value="1"/>
</dbReference>
<dbReference type="Gene3D" id="3.30.230.10">
    <property type="match status" value="1"/>
</dbReference>
<dbReference type="HAMAP" id="MF_00227">
    <property type="entry name" value="RNase_P"/>
    <property type="match status" value="1"/>
</dbReference>
<dbReference type="InterPro" id="IPR020568">
    <property type="entry name" value="Ribosomal_Su5_D2-typ_SF"/>
</dbReference>
<dbReference type="InterPro" id="IPR014721">
    <property type="entry name" value="Ribsml_uS5_D2-typ_fold_subgr"/>
</dbReference>
<dbReference type="InterPro" id="IPR000100">
    <property type="entry name" value="RNase_P"/>
</dbReference>
<dbReference type="InterPro" id="IPR020539">
    <property type="entry name" value="RNase_P_CS"/>
</dbReference>
<dbReference type="NCBIfam" id="TIGR00188">
    <property type="entry name" value="rnpA"/>
    <property type="match status" value="1"/>
</dbReference>
<dbReference type="PANTHER" id="PTHR33992">
    <property type="entry name" value="RIBONUCLEASE P PROTEIN COMPONENT"/>
    <property type="match status" value="1"/>
</dbReference>
<dbReference type="PANTHER" id="PTHR33992:SF1">
    <property type="entry name" value="RIBONUCLEASE P PROTEIN COMPONENT"/>
    <property type="match status" value="1"/>
</dbReference>
<dbReference type="Pfam" id="PF00825">
    <property type="entry name" value="Ribonuclease_P"/>
    <property type="match status" value="1"/>
</dbReference>
<dbReference type="SUPFAM" id="SSF54211">
    <property type="entry name" value="Ribosomal protein S5 domain 2-like"/>
    <property type="match status" value="1"/>
</dbReference>
<dbReference type="PROSITE" id="PS00648">
    <property type="entry name" value="RIBONUCLEASE_P"/>
    <property type="match status" value="1"/>
</dbReference>
<protein>
    <recommendedName>
        <fullName evidence="1">Ribonuclease P protein component</fullName>
        <shortName evidence="1">RNase P protein</shortName>
        <shortName evidence="1">RNaseP protein</shortName>
        <ecNumber evidence="1">3.1.26.5</ecNumber>
    </recommendedName>
    <alternativeName>
        <fullName evidence="1">Protein C5</fullName>
    </alternativeName>
</protein>
<accession>C4KZZ5</accession>
<proteinExistence type="inferred from homology"/>
<organism>
    <name type="scientific">Exiguobacterium sp. (strain ATCC BAA-1283 / AT1b)</name>
    <dbReference type="NCBI Taxonomy" id="360911"/>
    <lineage>
        <taxon>Bacteria</taxon>
        <taxon>Bacillati</taxon>
        <taxon>Bacillota</taxon>
        <taxon>Bacilli</taxon>
        <taxon>Bacillales</taxon>
        <taxon>Bacillales Family XII. Incertae Sedis</taxon>
        <taxon>Exiguobacterium</taxon>
    </lineage>
</organism>
<comment type="function">
    <text evidence="1">RNaseP catalyzes the removal of the 5'-leader sequence from pre-tRNA to produce the mature 5'-terminus. It can also cleave other RNA substrates such as 4.5S RNA. The protein component plays an auxiliary but essential role in vivo by binding to the 5'-leader sequence and broadening the substrate specificity of the ribozyme.</text>
</comment>
<comment type="catalytic activity">
    <reaction evidence="1">
        <text>Endonucleolytic cleavage of RNA, removing 5'-extranucleotides from tRNA precursor.</text>
        <dbReference type="EC" id="3.1.26.5"/>
    </reaction>
</comment>
<comment type="subunit">
    <text evidence="1">Consists of a catalytic RNA component (M1 or rnpB) and a protein subunit.</text>
</comment>
<comment type="similarity">
    <text evidence="1">Belongs to the RnpA family.</text>
</comment>
<reference key="1">
    <citation type="journal article" date="2011" name="J. Bacteriol.">
        <title>Complete genome sequence of the Thermophilic Bacterium Exiguobacterium sp. AT1b.</title>
        <authorList>
            <person name="Vishnivetskaya T.A."/>
            <person name="Lucas S."/>
            <person name="Copeland A."/>
            <person name="Lapidus A."/>
            <person name="Glavina del Rio T."/>
            <person name="Dalin E."/>
            <person name="Tice H."/>
            <person name="Bruce D.C."/>
            <person name="Goodwin L.A."/>
            <person name="Pitluck S."/>
            <person name="Saunders E."/>
            <person name="Brettin T."/>
            <person name="Detter C."/>
            <person name="Han C."/>
            <person name="Larimer F."/>
            <person name="Land M.L."/>
            <person name="Hauser L.J."/>
            <person name="Kyrpides N.C."/>
            <person name="Ovchinnikova G."/>
            <person name="Kathariou S."/>
            <person name="Ramaley R.F."/>
            <person name="Rodrigues D.F."/>
            <person name="Hendrix C."/>
            <person name="Richardson P."/>
            <person name="Tiedje J.M."/>
        </authorList>
    </citation>
    <scope>NUCLEOTIDE SEQUENCE [LARGE SCALE GENOMIC DNA]</scope>
    <source>
        <strain>ATCC BAA-1283 / AT1b</strain>
    </source>
</reference>
<gene>
    <name evidence="1" type="primary">rnpA</name>
    <name type="ordered locus">EAT1b_1732</name>
</gene>
<feature type="chain" id="PRO_1000204346" description="Ribonuclease P protein component">
    <location>
        <begin position="1"/>
        <end position="114"/>
    </location>
</feature>
<name>RNPA_EXISA</name>
<evidence type="ECO:0000255" key="1">
    <source>
        <dbReference type="HAMAP-Rule" id="MF_00227"/>
    </source>
</evidence>
<keyword id="KW-0255">Endonuclease</keyword>
<keyword id="KW-0378">Hydrolase</keyword>
<keyword id="KW-0540">Nuclease</keyword>
<keyword id="KW-0694">RNA-binding</keyword>
<keyword id="KW-0819">tRNA processing</keyword>
<sequence length="114" mass="13375">MKKEYRLQKNEEFQAVFREGRSVANRQFVVYTLKADQTHFRVGLSVSKKLGNAVERNRMKRLMRESLRLLEPNVAPNDYVIIARKPATALTQSEVTESLKHVFKRAKVWQKQGR</sequence>